<evidence type="ECO:0000255" key="1">
    <source>
        <dbReference type="HAMAP-Rule" id="MF_00184"/>
    </source>
</evidence>
<evidence type="ECO:0000255" key="2">
    <source>
        <dbReference type="PROSITE-ProRule" id="PRU01228"/>
    </source>
</evidence>
<reference key="1">
    <citation type="submission" date="2007-11" db="EMBL/GenBank/DDBJ databases">
        <title>The genome sequence of the hyperthermophilic bacterium Thermotoga neapolitana.</title>
        <authorList>
            <person name="Lim S.K."/>
            <person name="Kim J.S."/>
            <person name="Cha S.H."/>
            <person name="Park B.C."/>
            <person name="Lee D.S."/>
            <person name="Tae H.S."/>
            <person name="Kim S.-J."/>
            <person name="Kim J.J."/>
            <person name="Park K.J."/>
            <person name="Lee S.Y."/>
        </authorList>
    </citation>
    <scope>NUCLEOTIDE SEQUENCE [LARGE SCALE GENOMIC DNA]</scope>
    <source>
        <strain>ATCC 49049 / DSM 4359 / NBRC 107923 / NS-E</strain>
    </source>
</reference>
<comment type="function">
    <text evidence="1">Catalyzes the attachment of threonine to tRNA(Thr) in a two-step reaction: L-threonine is first activated by ATP to form Thr-AMP and then transferred to the acceptor end of tRNA(Thr). Also edits incorrectly charged L-seryl-tRNA(Thr).</text>
</comment>
<comment type="catalytic activity">
    <reaction evidence="1">
        <text>tRNA(Thr) + L-threonine + ATP = L-threonyl-tRNA(Thr) + AMP + diphosphate + H(+)</text>
        <dbReference type="Rhea" id="RHEA:24624"/>
        <dbReference type="Rhea" id="RHEA-COMP:9670"/>
        <dbReference type="Rhea" id="RHEA-COMP:9704"/>
        <dbReference type="ChEBI" id="CHEBI:15378"/>
        <dbReference type="ChEBI" id="CHEBI:30616"/>
        <dbReference type="ChEBI" id="CHEBI:33019"/>
        <dbReference type="ChEBI" id="CHEBI:57926"/>
        <dbReference type="ChEBI" id="CHEBI:78442"/>
        <dbReference type="ChEBI" id="CHEBI:78534"/>
        <dbReference type="ChEBI" id="CHEBI:456215"/>
        <dbReference type="EC" id="6.1.1.3"/>
    </reaction>
</comment>
<comment type="cofactor">
    <cofactor evidence="1">
        <name>Zn(2+)</name>
        <dbReference type="ChEBI" id="CHEBI:29105"/>
    </cofactor>
    <text evidence="1">Binds 1 zinc ion per subunit.</text>
</comment>
<comment type="subunit">
    <text evidence="1">Homodimer.</text>
</comment>
<comment type="subcellular location">
    <subcellularLocation>
        <location evidence="1">Cytoplasm</location>
    </subcellularLocation>
</comment>
<comment type="similarity">
    <text evidence="1">Belongs to the class-II aminoacyl-tRNA synthetase family.</text>
</comment>
<proteinExistence type="inferred from homology"/>
<keyword id="KW-0030">Aminoacyl-tRNA synthetase</keyword>
<keyword id="KW-0067">ATP-binding</keyword>
<keyword id="KW-0963">Cytoplasm</keyword>
<keyword id="KW-0436">Ligase</keyword>
<keyword id="KW-0479">Metal-binding</keyword>
<keyword id="KW-0547">Nucleotide-binding</keyword>
<keyword id="KW-0648">Protein biosynthesis</keyword>
<keyword id="KW-0694">RNA-binding</keyword>
<keyword id="KW-0820">tRNA-binding</keyword>
<keyword id="KW-0862">Zinc</keyword>
<organism>
    <name type="scientific">Thermotoga neapolitana (strain ATCC 49049 / DSM 4359 / NBRC 107923 / NS-E)</name>
    <dbReference type="NCBI Taxonomy" id="309803"/>
    <lineage>
        <taxon>Bacteria</taxon>
        <taxon>Thermotogati</taxon>
        <taxon>Thermotogota</taxon>
        <taxon>Thermotogae</taxon>
        <taxon>Thermotogales</taxon>
        <taxon>Thermotogaceae</taxon>
        <taxon>Thermotoga</taxon>
    </lineage>
</organism>
<accession>B9KAN7</accession>
<dbReference type="EC" id="6.1.1.3" evidence="1"/>
<dbReference type="EMBL" id="CP000916">
    <property type="protein sequence ID" value="ACM24020.1"/>
    <property type="molecule type" value="Genomic_DNA"/>
</dbReference>
<dbReference type="RefSeq" id="WP_015920256.1">
    <property type="nucleotide sequence ID" value="NC_011978.1"/>
</dbReference>
<dbReference type="SMR" id="B9KAN7"/>
<dbReference type="STRING" id="309803.CTN_1844"/>
<dbReference type="KEGG" id="tna:CTN_1844"/>
<dbReference type="eggNOG" id="COG0441">
    <property type="taxonomic scope" value="Bacteria"/>
</dbReference>
<dbReference type="HOGENOM" id="CLU_008554_0_1_0"/>
<dbReference type="Proteomes" id="UP000000445">
    <property type="component" value="Chromosome"/>
</dbReference>
<dbReference type="GO" id="GO:0005737">
    <property type="term" value="C:cytoplasm"/>
    <property type="evidence" value="ECO:0007669"/>
    <property type="project" value="UniProtKB-SubCell"/>
</dbReference>
<dbReference type="GO" id="GO:0005524">
    <property type="term" value="F:ATP binding"/>
    <property type="evidence" value="ECO:0007669"/>
    <property type="project" value="UniProtKB-UniRule"/>
</dbReference>
<dbReference type="GO" id="GO:0046872">
    <property type="term" value="F:metal ion binding"/>
    <property type="evidence" value="ECO:0007669"/>
    <property type="project" value="UniProtKB-KW"/>
</dbReference>
<dbReference type="GO" id="GO:0004829">
    <property type="term" value="F:threonine-tRNA ligase activity"/>
    <property type="evidence" value="ECO:0007669"/>
    <property type="project" value="UniProtKB-UniRule"/>
</dbReference>
<dbReference type="GO" id="GO:0000049">
    <property type="term" value="F:tRNA binding"/>
    <property type="evidence" value="ECO:0007669"/>
    <property type="project" value="UniProtKB-KW"/>
</dbReference>
<dbReference type="GO" id="GO:0006435">
    <property type="term" value="P:threonyl-tRNA aminoacylation"/>
    <property type="evidence" value="ECO:0007669"/>
    <property type="project" value="UniProtKB-UniRule"/>
</dbReference>
<dbReference type="CDD" id="cd01667">
    <property type="entry name" value="TGS_ThrRS"/>
    <property type="match status" value="1"/>
</dbReference>
<dbReference type="CDD" id="cd00860">
    <property type="entry name" value="ThrRS_anticodon"/>
    <property type="match status" value="1"/>
</dbReference>
<dbReference type="CDD" id="cd00771">
    <property type="entry name" value="ThrRS_core"/>
    <property type="match status" value="1"/>
</dbReference>
<dbReference type="FunFam" id="3.30.54.20:FF:000002">
    <property type="entry name" value="Threonine--tRNA ligase"/>
    <property type="match status" value="1"/>
</dbReference>
<dbReference type="FunFam" id="3.30.930.10:FF:000002">
    <property type="entry name" value="Threonine--tRNA ligase"/>
    <property type="match status" value="1"/>
</dbReference>
<dbReference type="FunFam" id="3.40.50.800:FF:000001">
    <property type="entry name" value="Threonine--tRNA ligase"/>
    <property type="match status" value="1"/>
</dbReference>
<dbReference type="FunFam" id="3.30.980.10:FF:000005">
    <property type="entry name" value="Threonyl-tRNA synthetase, mitochondrial"/>
    <property type="match status" value="1"/>
</dbReference>
<dbReference type="Gene3D" id="3.10.20.30">
    <property type="match status" value="1"/>
</dbReference>
<dbReference type="Gene3D" id="3.40.50.800">
    <property type="entry name" value="Anticodon-binding domain"/>
    <property type="match status" value="1"/>
</dbReference>
<dbReference type="Gene3D" id="3.30.930.10">
    <property type="entry name" value="Bira Bifunctional Protein, Domain 2"/>
    <property type="match status" value="1"/>
</dbReference>
<dbReference type="Gene3D" id="3.30.980.10">
    <property type="entry name" value="Threonyl-trna Synthetase, Chain A, domain 2"/>
    <property type="match status" value="1"/>
</dbReference>
<dbReference type="HAMAP" id="MF_00184">
    <property type="entry name" value="Thr_tRNA_synth"/>
    <property type="match status" value="1"/>
</dbReference>
<dbReference type="InterPro" id="IPR002314">
    <property type="entry name" value="aa-tRNA-synt_IIb"/>
</dbReference>
<dbReference type="InterPro" id="IPR006195">
    <property type="entry name" value="aa-tRNA-synth_II"/>
</dbReference>
<dbReference type="InterPro" id="IPR045864">
    <property type="entry name" value="aa-tRNA-synth_II/BPL/LPL"/>
</dbReference>
<dbReference type="InterPro" id="IPR004154">
    <property type="entry name" value="Anticodon-bd"/>
</dbReference>
<dbReference type="InterPro" id="IPR036621">
    <property type="entry name" value="Anticodon-bd_dom_sf"/>
</dbReference>
<dbReference type="InterPro" id="IPR012675">
    <property type="entry name" value="Beta-grasp_dom_sf"/>
</dbReference>
<dbReference type="InterPro" id="IPR004095">
    <property type="entry name" value="TGS"/>
</dbReference>
<dbReference type="InterPro" id="IPR012676">
    <property type="entry name" value="TGS-like"/>
</dbReference>
<dbReference type="InterPro" id="IPR002320">
    <property type="entry name" value="Thr-tRNA-ligase_IIa"/>
</dbReference>
<dbReference type="InterPro" id="IPR018163">
    <property type="entry name" value="Thr/Ala-tRNA-synth_IIc_edit"/>
</dbReference>
<dbReference type="InterPro" id="IPR047246">
    <property type="entry name" value="ThrRS_anticodon"/>
</dbReference>
<dbReference type="InterPro" id="IPR033728">
    <property type="entry name" value="ThrRS_core"/>
</dbReference>
<dbReference type="InterPro" id="IPR012947">
    <property type="entry name" value="tRNA_SAD"/>
</dbReference>
<dbReference type="NCBIfam" id="TIGR00418">
    <property type="entry name" value="thrS"/>
    <property type="match status" value="1"/>
</dbReference>
<dbReference type="PANTHER" id="PTHR11451:SF44">
    <property type="entry name" value="THREONINE--TRNA LIGASE, CHLOROPLASTIC_MITOCHONDRIAL 2"/>
    <property type="match status" value="1"/>
</dbReference>
<dbReference type="PANTHER" id="PTHR11451">
    <property type="entry name" value="THREONINE-TRNA LIGASE"/>
    <property type="match status" value="1"/>
</dbReference>
<dbReference type="Pfam" id="PF03129">
    <property type="entry name" value="HGTP_anticodon"/>
    <property type="match status" value="1"/>
</dbReference>
<dbReference type="Pfam" id="PF02824">
    <property type="entry name" value="TGS"/>
    <property type="match status" value="1"/>
</dbReference>
<dbReference type="Pfam" id="PF00587">
    <property type="entry name" value="tRNA-synt_2b"/>
    <property type="match status" value="1"/>
</dbReference>
<dbReference type="Pfam" id="PF07973">
    <property type="entry name" value="tRNA_SAD"/>
    <property type="match status" value="1"/>
</dbReference>
<dbReference type="PRINTS" id="PR01047">
    <property type="entry name" value="TRNASYNTHTHR"/>
</dbReference>
<dbReference type="SMART" id="SM00863">
    <property type="entry name" value="tRNA_SAD"/>
    <property type="match status" value="1"/>
</dbReference>
<dbReference type="SUPFAM" id="SSF52954">
    <property type="entry name" value="Class II aaRS ABD-related"/>
    <property type="match status" value="1"/>
</dbReference>
<dbReference type="SUPFAM" id="SSF55681">
    <property type="entry name" value="Class II aaRS and biotin synthetases"/>
    <property type="match status" value="1"/>
</dbReference>
<dbReference type="SUPFAM" id="SSF81271">
    <property type="entry name" value="TGS-like"/>
    <property type="match status" value="1"/>
</dbReference>
<dbReference type="SUPFAM" id="SSF55186">
    <property type="entry name" value="ThrRS/AlaRS common domain"/>
    <property type="match status" value="1"/>
</dbReference>
<dbReference type="PROSITE" id="PS50862">
    <property type="entry name" value="AA_TRNA_LIGASE_II"/>
    <property type="match status" value="1"/>
</dbReference>
<dbReference type="PROSITE" id="PS51880">
    <property type="entry name" value="TGS"/>
    <property type="match status" value="1"/>
</dbReference>
<gene>
    <name evidence="1" type="primary">thrS</name>
    <name type="ordered locus">CTN_1844</name>
</gene>
<name>SYT_THENN</name>
<feature type="chain" id="PRO_1000199575" description="Threonine--tRNA ligase">
    <location>
        <begin position="1"/>
        <end position="640"/>
    </location>
</feature>
<feature type="domain" description="TGS" evidence="2">
    <location>
        <begin position="1"/>
        <end position="59"/>
    </location>
</feature>
<feature type="region of interest" description="Catalytic" evidence="1">
    <location>
        <begin position="240"/>
        <end position="531"/>
    </location>
</feature>
<feature type="binding site" evidence="1">
    <location>
        <position position="332"/>
    </location>
    <ligand>
        <name>Zn(2+)</name>
        <dbReference type="ChEBI" id="CHEBI:29105"/>
    </ligand>
</feature>
<feature type="binding site" evidence="1">
    <location>
        <position position="383"/>
    </location>
    <ligand>
        <name>Zn(2+)</name>
        <dbReference type="ChEBI" id="CHEBI:29105"/>
    </ligand>
</feature>
<feature type="binding site" evidence="1">
    <location>
        <position position="508"/>
    </location>
    <ligand>
        <name>Zn(2+)</name>
        <dbReference type="ChEBI" id="CHEBI:29105"/>
    </ligand>
</feature>
<protein>
    <recommendedName>
        <fullName evidence="1">Threonine--tRNA ligase</fullName>
        <ecNumber evidence="1">6.1.1.3</ecNumber>
    </recommendedName>
    <alternativeName>
        <fullName evidence="1">Threonyl-tRNA synthetase</fullName>
        <shortName evidence="1">ThrRS</shortName>
    </alternativeName>
</protein>
<sequence>MKIKVVLPDGSEREYEKGTKPMEIAREVGIKKVIGAVVDEELWDLKRPLERDCRIRFVTLEDPEAPEFYRHTMAHILAQAVMRLYGKENVKLGIGPTIENGFYYDFDIRNGKLTEEDLPRIEQEMKKIIKENLPIEREEISKDEAKEIFKDQPYKLELIEEIEGDTVTIYRQGEFVDLCRGPHLPSTGVVKHFKLLSVSGAYWRGSEKNPMLTRVYGTAFAKKEDLENYLKFLEEAQKRDHRKLGPQLELFMLNTDYAPGMPFFLPRGVIVLNELMNFSRELHRERGYQEIFTPLIMNEQLWRISGHWDHYAENMYFIEKGEERYAVKPMNCPGHILVYKSRAVSYRDLPLRFFEFGRVHRYERSGVLHGLMRVRSFTQDDAHIFCTPDQIEDEILGVLELINTIYSQFGFTYRVELSTMPEDHMGDEAIWEKATNALKKALDRAGLPYRVNEGEGAFYGPKIDFHIKDSLGREWQCATIQLDFMMPEKFNVTYIGPDNREHTAVMIHRAIYGSLERFFGILIEHFAGAFPTWIAPVQVAVIPISDKHSEGAKKVATMLSREGFRVFLDDRRETLGYRIRQAQIQKIPYMVVLGDRELESGKLSVRTRSGKEIKDVEMDHFIDTLKKEVRDRKLELTLEG</sequence>